<keyword id="KW-0997">Cell inner membrane</keyword>
<keyword id="KW-1003">Cell membrane</keyword>
<keyword id="KW-0407">Ion channel</keyword>
<keyword id="KW-0406">Ion transport</keyword>
<keyword id="KW-0472">Membrane</keyword>
<keyword id="KW-0479">Metal-binding</keyword>
<keyword id="KW-0915">Sodium</keyword>
<keyword id="KW-0812">Transmembrane</keyword>
<keyword id="KW-1133">Transmembrane helix</keyword>
<keyword id="KW-0813">Transport</keyword>
<dbReference type="EMBL" id="CP001358">
    <property type="protein sequence ID" value="ACL49029.1"/>
    <property type="molecule type" value="Genomic_DNA"/>
</dbReference>
<dbReference type="SMR" id="B8IZV2"/>
<dbReference type="STRING" id="525146.Ddes_1125"/>
<dbReference type="KEGG" id="dds:Ddes_1125"/>
<dbReference type="eggNOG" id="COG0239">
    <property type="taxonomic scope" value="Bacteria"/>
</dbReference>
<dbReference type="HOGENOM" id="CLU_114342_3_3_7"/>
<dbReference type="GO" id="GO:0005886">
    <property type="term" value="C:plasma membrane"/>
    <property type="evidence" value="ECO:0007669"/>
    <property type="project" value="UniProtKB-SubCell"/>
</dbReference>
<dbReference type="GO" id="GO:0062054">
    <property type="term" value="F:fluoride channel activity"/>
    <property type="evidence" value="ECO:0007669"/>
    <property type="project" value="UniProtKB-UniRule"/>
</dbReference>
<dbReference type="GO" id="GO:0046872">
    <property type="term" value="F:metal ion binding"/>
    <property type="evidence" value="ECO:0007669"/>
    <property type="project" value="UniProtKB-KW"/>
</dbReference>
<dbReference type="GO" id="GO:0140114">
    <property type="term" value="P:cellular detoxification of fluoride"/>
    <property type="evidence" value="ECO:0007669"/>
    <property type="project" value="UniProtKB-UniRule"/>
</dbReference>
<dbReference type="HAMAP" id="MF_00454">
    <property type="entry name" value="FluC"/>
    <property type="match status" value="1"/>
</dbReference>
<dbReference type="InterPro" id="IPR003691">
    <property type="entry name" value="FluC"/>
</dbReference>
<dbReference type="NCBIfam" id="TIGR00494">
    <property type="entry name" value="crcB"/>
    <property type="match status" value="1"/>
</dbReference>
<dbReference type="NCBIfam" id="NF010792">
    <property type="entry name" value="PRK14196.1"/>
    <property type="match status" value="1"/>
</dbReference>
<dbReference type="PANTHER" id="PTHR28259">
    <property type="entry name" value="FLUORIDE EXPORT PROTEIN 1-RELATED"/>
    <property type="match status" value="1"/>
</dbReference>
<dbReference type="PANTHER" id="PTHR28259:SF1">
    <property type="entry name" value="FLUORIDE EXPORT PROTEIN 1-RELATED"/>
    <property type="match status" value="1"/>
</dbReference>
<dbReference type="Pfam" id="PF02537">
    <property type="entry name" value="CRCB"/>
    <property type="match status" value="1"/>
</dbReference>
<gene>
    <name evidence="1" type="primary">fluC</name>
    <name evidence="1" type="synonym">crcB</name>
    <name type="ordered locus">Ddes_1125</name>
</gene>
<proteinExistence type="inferred from homology"/>
<reference key="1">
    <citation type="submission" date="2009-01" db="EMBL/GenBank/DDBJ databases">
        <title>Complete sequence of Desulfovibrio desulfuricans subsp. desulfuricans str. ATCC 27774.</title>
        <authorList>
            <consortium name="US DOE Joint Genome Institute"/>
            <person name="Lucas S."/>
            <person name="Copeland A."/>
            <person name="Lapidus A."/>
            <person name="Glavina del Rio T."/>
            <person name="Tice H."/>
            <person name="Bruce D."/>
            <person name="Goodwin L."/>
            <person name="Pitluck S."/>
            <person name="Sims D."/>
            <person name="Lu M."/>
            <person name="Kiss H."/>
            <person name="Meineke L."/>
            <person name="Brettin T."/>
            <person name="Detter J.C."/>
            <person name="Han C."/>
            <person name="Larimer F."/>
            <person name="Land M."/>
            <person name="Hauser L."/>
            <person name="Kyrpides N."/>
            <person name="Ovchinnikova G."/>
            <person name="Hazen T.C."/>
        </authorList>
    </citation>
    <scope>NUCLEOTIDE SEQUENCE [LARGE SCALE GENOMIC DNA]</scope>
    <source>
        <strain>ATCC 27774 / DSM 6949 / MB</strain>
    </source>
</reference>
<evidence type="ECO:0000255" key="1">
    <source>
        <dbReference type="HAMAP-Rule" id="MF_00454"/>
    </source>
</evidence>
<protein>
    <recommendedName>
        <fullName evidence="1">Fluoride-specific ion channel FluC</fullName>
    </recommendedName>
</protein>
<organism>
    <name type="scientific">Desulfovibrio desulfuricans (strain ATCC 27774 / DSM 6949 / MB)</name>
    <dbReference type="NCBI Taxonomy" id="525146"/>
    <lineage>
        <taxon>Bacteria</taxon>
        <taxon>Pseudomonadati</taxon>
        <taxon>Thermodesulfobacteriota</taxon>
        <taxon>Desulfovibrionia</taxon>
        <taxon>Desulfovibrionales</taxon>
        <taxon>Desulfovibrionaceae</taxon>
        <taxon>Desulfovibrio</taxon>
    </lineage>
</organism>
<sequence>MLKTLALISIGASCGAILRWFLGLMLNAIFLPIPLGTLAANLLGGYLIGVAVSMFNALSAVGPEFRLLIITGFLGGLTTFSTFTAEIGVLLQGQRIMTAVAAIVLHVCGSLIMMLLGMGTFALLRTCFR</sequence>
<accession>B8IZV2</accession>
<comment type="function">
    <text evidence="1">Fluoride-specific ion channel. Important for reducing fluoride concentration in the cell, thus reducing its toxicity.</text>
</comment>
<comment type="catalytic activity">
    <reaction evidence="1">
        <text>fluoride(in) = fluoride(out)</text>
        <dbReference type="Rhea" id="RHEA:76159"/>
        <dbReference type="ChEBI" id="CHEBI:17051"/>
    </reaction>
    <physiologicalReaction direction="left-to-right" evidence="1">
        <dbReference type="Rhea" id="RHEA:76160"/>
    </physiologicalReaction>
</comment>
<comment type="activity regulation">
    <text evidence="1">Na(+) is not transported, but it plays an essential structural role and its presence is essential for fluoride channel function.</text>
</comment>
<comment type="subcellular location">
    <subcellularLocation>
        <location evidence="1">Cell inner membrane</location>
        <topology evidence="1">Multi-pass membrane protein</topology>
    </subcellularLocation>
</comment>
<comment type="similarity">
    <text evidence="1">Belongs to the fluoride channel Fluc/FEX (TC 1.A.43) family.</text>
</comment>
<name>FLUC_DESDA</name>
<feature type="chain" id="PRO_1000135319" description="Fluoride-specific ion channel FluC">
    <location>
        <begin position="1"/>
        <end position="129"/>
    </location>
</feature>
<feature type="transmembrane region" description="Helical" evidence="1">
    <location>
        <begin position="20"/>
        <end position="40"/>
    </location>
</feature>
<feature type="transmembrane region" description="Helical" evidence="1">
    <location>
        <begin position="67"/>
        <end position="87"/>
    </location>
</feature>
<feature type="transmembrane region" description="Helical" evidence="1">
    <location>
        <begin position="96"/>
        <end position="116"/>
    </location>
</feature>
<feature type="binding site" evidence="1">
    <location>
        <position position="75"/>
    </location>
    <ligand>
        <name>Na(+)</name>
        <dbReference type="ChEBI" id="CHEBI:29101"/>
        <note>structural</note>
    </ligand>
</feature>
<feature type="binding site" evidence="1">
    <location>
        <position position="78"/>
    </location>
    <ligand>
        <name>Na(+)</name>
        <dbReference type="ChEBI" id="CHEBI:29101"/>
        <note>structural</note>
    </ligand>
</feature>